<feature type="chain" id="PRO_0000311815" description="Serpin B6">
    <location>
        <begin position="1"/>
        <end position="376"/>
    </location>
</feature>
<feature type="site" description="Reactive bond">
    <location>
        <begin position="341"/>
        <end position="342"/>
    </location>
</feature>
<feature type="modified residue" description="N-acetylmethionine" evidence="2">
    <location>
        <position position="1"/>
    </location>
</feature>
<feature type="modified residue" description="Phosphoserine" evidence="2">
    <location>
        <position position="151"/>
    </location>
</feature>
<feature type="modified residue" description="N6-acetyllysine" evidence="3">
    <location>
        <position position="195"/>
    </location>
</feature>
<proteinExistence type="evidence at transcript level"/>
<keyword id="KW-0007">Acetylation</keyword>
<keyword id="KW-0963">Cytoplasm</keyword>
<keyword id="KW-0597">Phosphoprotein</keyword>
<keyword id="KW-0646">Protease inhibitor</keyword>
<keyword id="KW-1185">Reference proteome</keyword>
<keyword id="KW-0722">Serine protease inhibitor</keyword>
<organism>
    <name type="scientific">Macaca fascicularis</name>
    <name type="common">Crab-eating macaque</name>
    <name type="synonym">Cynomolgus monkey</name>
    <dbReference type="NCBI Taxonomy" id="9541"/>
    <lineage>
        <taxon>Eukaryota</taxon>
        <taxon>Metazoa</taxon>
        <taxon>Chordata</taxon>
        <taxon>Craniata</taxon>
        <taxon>Vertebrata</taxon>
        <taxon>Euteleostomi</taxon>
        <taxon>Mammalia</taxon>
        <taxon>Eutheria</taxon>
        <taxon>Euarchontoglires</taxon>
        <taxon>Primates</taxon>
        <taxon>Haplorrhini</taxon>
        <taxon>Catarrhini</taxon>
        <taxon>Cercopithecidae</taxon>
        <taxon>Cercopithecinae</taxon>
        <taxon>Macaca</taxon>
    </lineage>
</organism>
<accession>Q4R3G2</accession>
<reference key="1">
    <citation type="submission" date="2005-06" db="EMBL/GenBank/DDBJ databases">
        <title>DNA sequences of macaque genes expressed in brain or testis and its evolutionary implications.</title>
        <authorList>
            <consortium name="International consortium for macaque cDNA sequencing and analysis"/>
        </authorList>
    </citation>
    <scope>NUCLEOTIDE SEQUENCE [LARGE SCALE MRNA]</scope>
    <source>
        <tissue>Testis</tissue>
    </source>
</reference>
<evidence type="ECO:0000250" key="1"/>
<evidence type="ECO:0000250" key="2">
    <source>
        <dbReference type="UniProtKB" id="P35237"/>
    </source>
</evidence>
<evidence type="ECO:0000250" key="3">
    <source>
        <dbReference type="UniProtKB" id="Q60854"/>
    </source>
</evidence>
<evidence type="ECO:0000305" key="4"/>
<gene>
    <name type="primary">SERPINB6</name>
    <name type="ORF">QtsA-17114</name>
</gene>
<comment type="function">
    <text evidence="1">Inhibitor of cathepsin G, kallikrein-8 and thrombin. May play an important role in the inner ear in the protection against leakage of lysosomal content during stress. May be involved in the regulation of serine proteinases present in the brain or extravasated from the blood (By similarity).</text>
</comment>
<comment type="subunit">
    <text evidence="1">Forms a complex with the monomeric form of beta-tryptase.</text>
</comment>
<comment type="subcellular location">
    <subcellularLocation>
        <location evidence="1">Cytoplasm</location>
    </subcellularLocation>
</comment>
<comment type="similarity">
    <text evidence="4">Belongs to the serpin family. Ov-serpin subfamily.</text>
</comment>
<protein>
    <recommendedName>
        <fullName>Serpin B6</fullName>
    </recommendedName>
</protein>
<name>SPB6_MACFA</name>
<sequence>MDVLAEANGTFALNLLKTLGKDNSKNVFFSPMSMSCALAMVYMGAKGNTAAQMAQVLSFNKSGGGGDIHQGFQSLLTEVNKTGTQYLLRTANRLFGEKSCDFLSSFRDSCQKFYQAEMEELDFISAVEKSRKHINSWVAEKTEGKIAELLSPGSVDPLTRLVLVNAVYFKGNWNEQFDKENTEERRFKVSKNEEKPVQMMFMQSTFRKTYIGEIFTQILVLPYVGKELNMIIMLPDETTDLRTVEKELTYEKFVEWTRLDMMDEEKVEVSLPRFKLEESYDMESVLCSLGMTDAFELGKADFSGMSKADLCLSKVVHKSFVEVNEEGTEAAAATAAIMMMRCARFVPRFCADHPFLFFIQHSKTNGVLFCGRFSSP</sequence>
<dbReference type="EMBL" id="AB179304">
    <property type="protein sequence ID" value="BAE02355.1"/>
    <property type="molecule type" value="mRNA"/>
</dbReference>
<dbReference type="RefSeq" id="NP_001272307.1">
    <property type="nucleotide sequence ID" value="NM_001285378.1"/>
</dbReference>
<dbReference type="SMR" id="Q4R3G2"/>
<dbReference type="STRING" id="9541.ENSMFAP00000024565"/>
<dbReference type="MEROPS" id="I04.011"/>
<dbReference type="eggNOG" id="KOG2392">
    <property type="taxonomic scope" value="Eukaryota"/>
</dbReference>
<dbReference type="Proteomes" id="UP000233100">
    <property type="component" value="Unplaced"/>
</dbReference>
<dbReference type="GO" id="GO:0005737">
    <property type="term" value="C:cytoplasm"/>
    <property type="evidence" value="ECO:0000250"/>
    <property type="project" value="UniProtKB"/>
</dbReference>
<dbReference type="GO" id="GO:0005615">
    <property type="term" value="C:extracellular space"/>
    <property type="evidence" value="ECO:0007669"/>
    <property type="project" value="InterPro"/>
</dbReference>
<dbReference type="GO" id="GO:0004867">
    <property type="term" value="F:serine-type endopeptidase inhibitor activity"/>
    <property type="evidence" value="ECO:0007669"/>
    <property type="project" value="UniProtKB-KW"/>
</dbReference>
<dbReference type="CDD" id="cd19565">
    <property type="entry name" value="serpinB6_CAP"/>
    <property type="match status" value="1"/>
</dbReference>
<dbReference type="FunFam" id="2.30.39.10:FF:000001">
    <property type="entry name" value="Serpin family B member 2"/>
    <property type="match status" value="1"/>
</dbReference>
<dbReference type="FunFam" id="3.30.497.10:FF:000018">
    <property type="entry name" value="Serpin family B member 8"/>
    <property type="match status" value="1"/>
</dbReference>
<dbReference type="Gene3D" id="2.30.39.10">
    <property type="entry name" value="Alpha-1-antitrypsin, domain 1"/>
    <property type="match status" value="1"/>
</dbReference>
<dbReference type="Gene3D" id="3.30.497.10">
    <property type="entry name" value="Antithrombin, subunit I, domain 2"/>
    <property type="match status" value="1"/>
</dbReference>
<dbReference type="InterPro" id="IPR023795">
    <property type="entry name" value="Serpin_CS"/>
</dbReference>
<dbReference type="InterPro" id="IPR023796">
    <property type="entry name" value="Serpin_dom"/>
</dbReference>
<dbReference type="InterPro" id="IPR000215">
    <property type="entry name" value="Serpin_fam"/>
</dbReference>
<dbReference type="InterPro" id="IPR036186">
    <property type="entry name" value="Serpin_sf"/>
</dbReference>
<dbReference type="InterPro" id="IPR042178">
    <property type="entry name" value="Serpin_sf_1"/>
</dbReference>
<dbReference type="InterPro" id="IPR042185">
    <property type="entry name" value="Serpin_sf_2"/>
</dbReference>
<dbReference type="PANTHER" id="PTHR11461">
    <property type="entry name" value="SERINE PROTEASE INHIBITOR, SERPIN"/>
    <property type="match status" value="1"/>
</dbReference>
<dbReference type="PANTHER" id="PTHR11461:SF204">
    <property type="entry name" value="SERPIN B6"/>
    <property type="match status" value="1"/>
</dbReference>
<dbReference type="Pfam" id="PF00079">
    <property type="entry name" value="Serpin"/>
    <property type="match status" value="1"/>
</dbReference>
<dbReference type="SMART" id="SM00093">
    <property type="entry name" value="SERPIN"/>
    <property type="match status" value="1"/>
</dbReference>
<dbReference type="SUPFAM" id="SSF56574">
    <property type="entry name" value="Serpins"/>
    <property type="match status" value="1"/>
</dbReference>
<dbReference type="PROSITE" id="PS00284">
    <property type="entry name" value="SERPIN"/>
    <property type="match status" value="1"/>
</dbReference>